<organism>
    <name type="scientific">Chassalia parviflora</name>
    <dbReference type="NCBI Taxonomy" id="58431"/>
    <lineage>
        <taxon>Eukaryota</taxon>
        <taxon>Viridiplantae</taxon>
        <taxon>Streptophyta</taxon>
        <taxon>Embryophyta</taxon>
        <taxon>Tracheophyta</taxon>
        <taxon>Spermatophyta</taxon>
        <taxon>Magnoliopsida</taxon>
        <taxon>eudicotyledons</taxon>
        <taxon>Gunneridae</taxon>
        <taxon>Pentapetalae</taxon>
        <taxon>asterids</taxon>
        <taxon>lamiids</taxon>
        <taxon>Gentianales</taxon>
        <taxon>Rubiaceae</taxon>
        <taxon>Rubioideae</taxon>
        <taxon>Palicoureeae</taxon>
        <taxon>Chassalia</taxon>
    </lineage>
</organism>
<accession>P84644</accession>
<dbReference type="SMR" id="P84644"/>
<dbReference type="GO" id="GO:0006952">
    <property type="term" value="P:defense response"/>
    <property type="evidence" value="ECO:0000314"/>
    <property type="project" value="UniProtKB"/>
</dbReference>
<dbReference type="GO" id="GO:0050688">
    <property type="term" value="P:regulation of defense response to virus"/>
    <property type="evidence" value="ECO:0007669"/>
    <property type="project" value="UniProtKB-KW"/>
</dbReference>
<dbReference type="InterPro" id="IPR005535">
    <property type="entry name" value="Cyclotide"/>
</dbReference>
<dbReference type="InterPro" id="IPR012323">
    <property type="entry name" value="Cyclotide_bracelet_CS"/>
</dbReference>
<dbReference type="InterPro" id="IPR036146">
    <property type="entry name" value="Cyclotide_sf"/>
</dbReference>
<dbReference type="Pfam" id="PF03784">
    <property type="entry name" value="Cyclotide"/>
    <property type="match status" value="1"/>
</dbReference>
<dbReference type="PIRSF" id="PIRSF037891">
    <property type="entry name" value="Cycloviolacin"/>
    <property type="match status" value="1"/>
</dbReference>
<dbReference type="SUPFAM" id="SSF57038">
    <property type="entry name" value="Cyclotides"/>
    <property type="match status" value="1"/>
</dbReference>
<dbReference type="PROSITE" id="PS51052">
    <property type="entry name" value="CYCLOTIDE"/>
    <property type="match status" value="1"/>
</dbReference>
<dbReference type="PROSITE" id="PS60008">
    <property type="entry name" value="CYCLOTIDE_BRACELET"/>
    <property type="match status" value="1"/>
</dbReference>
<evidence type="ECO:0000250" key="1">
    <source>
        <dbReference type="UniProtKB" id="P56871"/>
    </source>
</evidence>
<evidence type="ECO:0000255" key="2">
    <source>
        <dbReference type="PROSITE-ProRule" id="PRU00395"/>
    </source>
</evidence>
<evidence type="ECO:0000269" key="3">
    <source>
    </source>
</evidence>
<evidence type="ECO:0000305" key="4"/>
<name>CIRF_CHAPA</name>
<feature type="peptide" id="PRO_0000043603" description="Circulin-F" evidence="2 3">
    <location>
        <begin position="1"/>
        <end position="29"/>
    </location>
</feature>
<feature type="disulfide bond" evidence="1 2">
    <location>
        <begin position="4"/>
        <end position="20"/>
    </location>
</feature>
<feature type="disulfide bond" evidence="1 2">
    <location>
        <begin position="8"/>
        <end position="22"/>
    </location>
</feature>
<feature type="disulfide bond" evidence="1 2">
    <location>
        <begin position="13"/>
        <end position="27"/>
    </location>
</feature>
<feature type="cross-link" description="Cyclopeptide (Ala-Arg)" evidence="3">
    <location>
        <begin position="1"/>
        <end position="29"/>
    </location>
</feature>
<reference evidence="4" key="1">
    <citation type="journal article" date="2000" name="J. Nat. Prod.">
        <title>New circulin macrocyclic polypeptides from Chassalia parvifolia.</title>
        <authorList>
            <person name="Gustafson K.R."/>
            <person name="Walton L.K."/>
            <person name="Sowder R.C. Jr."/>
            <person name="Johnson D.G."/>
            <person name="Pannell L.K."/>
            <person name="Cardellina J.H. Jr."/>
            <person name="Boyd M.R."/>
        </authorList>
    </citation>
    <scope>PROTEIN SEQUENCE</scope>
    <scope>FUNCTION</scope>
    <scope>MASS SPECTROMETRY</scope>
</reference>
<comment type="function">
    <text evidence="2 3 4">Probably participates in a plant defense mechanism. Inhibits the cytopathic effects of the human immunodeficiency virus.</text>
</comment>
<comment type="domain">
    <text evidence="1">The presence of a 'disulfide through disulfide knot' structurally defines this protein as a knottin.</text>
</comment>
<comment type="PTM">
    <text evidence="2 3">This is a cyclic peptide.</text>
</comment>
<comment type="mass spectrometry"/>
<comment type="similarity">
    <text evidence="2">Belongs to the cyclotide family. Bracelet subfamily.</text>
</comment>
<comment type="caution">
    <text evidence="4">This peptide is cyclic. The start position was chosen by similarity to OAK1 (kalata-B1) for which the DNA sequence is known.</text>
</comment>
<proteinExistence type="evidence at protein level"/>
<keyword id="KW-0930">Antiviral protein</keyword>
<keyword id="KW-0903">Direct protein sequencing</keyword>
<keyword id="KW-1015">Disulfide bond</keyword>
<keyword id="KW-0960">Knottin</keyword>
<keyword id="KW-0611">Plant defense</keyword>
<sequence>AIPCGESCVWIPCISAAIGCSCKNKVCYR</sequence>
<protein>
    <recommendedName>
        <fullName>Circulin-F</fullName>
        <shortName>CIRF</shortName>
    </recommendedName>
</protein>